<protein>
    <recommendedName>
        <fullName>Centrosomal protein of 70 kDa</fullName>
        <shortName>Cep70</shortName>
    </recommendedName>
</protein>
<gene>
    <name type="primary">Cep70</name>
</gene>
<reference key="1">
    <citation type="submission" date="2000-03" db="EMBL/GenBank/DDBJ databases">
        <authorList>
            <person name="Zimmermann S."/>
            <person name="Kemler R."/>
            <person name="Orsulic S."/>
        </authorList>
    </citation>
    <scope>NUCLEOTIDE SEQUENCE [MRNA] (ISOFORM 1)</scope>
    <source>
        <tissue>Embryo</tissue>
    </source>
</reference>
<reference key="2">
    <citation type="journal article" date="2005" name="Science">
        <title>The transcriptional landscape of the mammalian genome.</title>
        <authorList>
            <person name="Carninci P."/>
            <person name="Kasukawa T."/>
            <person name="Katayama S."/>
            <person name="Gough J."/>
            <person name="Frith M.C."/>
            <person name="Maeda N."/>
            <person name="Oyama R."/>
            <person name="Ravasi T."/>
            <person name="Lenhard B."/>
            <person name="Wells C."/>
            <person name="Kodzius R."/>
            <person name="Shimokawa K."/>
            <person name="Bajic V.B."/>
            <person name="Brenner S.E."/>
            <person name="Batalov S."/>
            <person name="Forrest A.R."/>
            <person name="Zavolan M."/>
            <person name="Davis M.J."/>
            <person name="Wilming L.G."/>
            <person name="Aidinis V."/>
            <person name="Allen J.E."/>
            <person name="Ambesi-Impiombato A."/>
            <person name="Apweiler R."/>
            <person name="Aturaliya R.N."/>
            <person name="Bailey T.L."/>
            <person name="Bansal M."/>
            <person name="Baxter L."/>
            <person name="Beisel K.W."/>
            <person name="Bersano T."/>
            <person name="Bono H."/>
            <person name="Chalk A.M."/>
            <person name="Chiu K.P."/>
            <person name="Choudhary V."/>
            <person name="Christoffels A."/>
            <person name="Clutterbuck D.R."/>
            <person name="Crowe M.L."/>
            <person name="Dalla E."/>
            <person name="Dalrymple B.P."/>
            <person name="de Bono B."/>
            <person name="Della Gatta G."/>
            <person name="di Bernardo D."/>
            <person name="Down T."/>
            <person name="Engstrom P."/>
            <person name="Fagiolini M."/>
            <person name="Faulkner G."/>
            <person name="Fletcher C.F."/>
            <person name="Fukushima T."/>
            <person name="Furuno M."/>
            <person name="Futaki S."/>
            <person name="Gariboldi M."/>
            <person name="Georgii-Hemming P."/>
            <person name="Gingeras T.R."/>
            <person name="Gojobori T."/>
            <person name="Green R.E."/>
            <person name="Gustincich S."/>
            <person name="Harbers M."/>
            <person name="Hayashi Y."/>
            <person name="Hensch T.K."/>
            <person name="Hirokawa N."/>
            <person name="Hill D."/>
            <person name="Huminiecki L."/>
            <person name="Iacono M."/>
            <person name="Ikeo K."/>
            <person name="Iwama A."/>
            <person name="Ishikawa T."/>
            <person name="Jakt M."/>
            <person name="Kanapin A."/>
            <person name="Katoh M."/>
            <person name="Kawasawa Y."/>
            <person name="Kelso J."/>
            <person name="Kitamura H."/>
            <person name="Kitano H."/>
            <person name="Kollias G."/>
            <person name="Krishnan S.P."/>
            <person name="Kruger A."/>
            <person name="Kummerfeld S.K."/>
            <person name="Kurochkin I.V."/>
            <person name="Lareau L.F."/>
            <person name="Lazarevic D."/>
            <person name="Lipovich L."/>
            <person name="Liu J."/>
            <person name="Liuni S."/>
            <person name="McWilliam S."/>
            <person name="Madan Babu M."/>
            <person name="Madera M."/>
            <person name="Marchionni L."/>
            <person name="Matsuda H."/>
            <person name="Matsuzawa S."/>
            <person name="Miki H."/>
            <person name="Mignone F."/>
            <person name="Miyake S."/>
            <person name="Morris K."/>
            <person name="Mottagui-Tabar S."/>
            <person name="Mulder N."/>
            <person name="Nakano N."/>
            <person name="Nakauchi H."/>
            <person name="Ng P."/>
            <person name="Nilsson R."/>
            <person name="Nishiguchi S."/>
            <person name="Nishikawa S."/>
            <person name="Nori F."/>
            <person name="Ohara O."/>
            <person name="Okazaki Y."/>
            <person name="Orlando V."/>
            <person name="Pang K.C."/>
            <person name="Pavan W.J."/>
            <person name="Pavesi G."/>
            <person name="Pesole G."/>
            <person name="Petrovsky N."/>
            <person name="Piazza S."/>
            <person name="Reed J."/>
            <person name="Reid J.F."/>
            <person name="Ring B.Z."/>
            <person name="Ringwald M."/>
            <person name="Rost B."/>
            <person name="Ruan Y."/>
            <person name="Salzberg S.L."/>
            <person name="Sandelin A."/>
            <person name="Schneider C."/>
            <person name="Schoenbach C."/>
            <person name="Sekiguchi K."/>
            <person name="Semple C.A."/>
            <person name="Seno S."/>
            <person name="Sessa L."/>
            <person name="Sheng Y."/>
            <person name="Shibata Y."/>
            <person name="Shimada H."/>
            <person name="Shimada K."/>
            <person name="Silva D."/>
            <person name="Sinclair B."/>
            <person name="Sperling S."/>
            <person name="Stupka E."/>
            <person name="Sugiura K."/>
            <person name="Sultana R."/>
            <person name="Takenaka Y."/>
            <person name="Taki K."/>
            <person name="Tammoja K."/>
            <person name="Tan S.L."/>
            <person name="Tang S."/>
            <person name="Taylor M.S."/>
            <person name="Tegner J."/>
            <person name="Teichmann S.A."/>
            <person name="Ueda H.R."/>
            <person name="van Nimwegen E."/>
            <person name="Verardo R."/>
            <person name="Wei C.L."/>
            <person name="Yagi K."/>
            <person name="Yamanishi H."/>
            <person name="Zabarovsky E."/>
            <person name="Zhu S."/>
            <person name="Zimmer A."/>
            <person name="Hide W."/>
            <person name="Bult C."/>
            <person name="Grimmond S.M."/>
            <person name="Teasdale R.D."/>
            <person name="Liu E.T."/>
            <person name="Brusic V."/>
            <person name="Quackenbush J."/>
            <person name="Wahlestedt C."/>
            <person name="Mattick J.S."/>
            <person name="Hume D.A."/>
            <person name="Kai C."/>
            <person name="Sasaki D."/>
            <person name="Tomaru Y."/>
            <person name="Fukuda S."/>
            <person name="Kanamori-Katayama M."/>
            <person name="Suzuki M."/>
            <person name="Aoki J."/>
            <person name="Arakawa T."/>
            <person name="Iida J."/>
            <person name="Imamura K."/>
            <person name="Itoh M."/>
            <person name="Kato T."/>
            <person name="Kawaji H."/>
            <person name="Kawagashira N."/>
            <person name="Kawashima T."/>
            <person name="Kojima M."/>
            <person name="Kondo S."/>
            <person name="Konno H."/>
            <person name="Nakano K."/>
            <person name="Ninomiya N."/>
            <person name="Nishio T."/>
            <person name="Okada M."/>
            <person name="Plessy C."/>
            <person name="Shibata K."/>
            <person name="Shiraki T."/>
            <person name="Suzuki S."/>
            <person name="Tagami M."/>
            <person name="Waki K."/>
            <person name="Watahiki A."/>
            <person name="Okamura-Oho Y."/>
            <person name="Suzuki H."/>
            <person name="Kawai J."/>
            <person name="Hayashizaki Y."/>
        </authorList>
    </citation>
    <scope>NUCLEOTIDE SEQUENCE [LARGE SCALE MRNA] (ISOFORM 2)</scope>
    <scope>NUCLEOTIDE SEQUENCE [LARGE SCALE GENOMIC DNA] OF 1-170 (ISOFORMS 1/2)</scope>
    <source>
        <strain>C57BL/6J</strain>
        <tissue>Testis</tissue>
        <tissue>Urinary bladder</tissue>
        <tissue>Wolffian duct</tissue>
    </source>
</reference>
<reference key="3">
    <citation type="journal article" date="2004" name="Genome Res.">
        <title>The status, quality, and expansion of the NIH full-length cDNA project: the Mammalian Gene Collection (MGC).</title>
        <authorList>
            <consortium name="The MGC Project Team"/>
        </authorList>
    </citation>
    <scope>NUCLEOTIDE SEQUENCE [LARGE SCALE GENOMIC DNA]</scope>
    <source>
        <tissue>Embryo</tissue>
        <tissue>Limb</tissue>
    </source>
</reference>
<organism>
    <name type="scientific">Mus musculus</name>
    <name type="common">Mouse</name>
    <dbReference type="NCBI Taxonomy" id="10090"/>
    <lineage>
        <taxon>Eukaryota</taxon>
        <taxon>Metazoa</taxon>
        <taxon>Chordata</taxon>
        <taxon>Craniata</taxon>
        <taxon>Vertebrata</taxon>
        <taxon>Euteleostomi</taxon>
        <taxon>Mammalia</taxon>
        <taxon>Eutheria</taxon>
        <taxon>Euarchontoglires</taxon>
        <taxon>Glires</taxon>
        <taxon>Rodentia</taxon>
        <taxon>Myomorpha</taxon>
        <taxon>Muroidea</taxon>
        <taxon>Muridae</taxon>
        <taxon>Murinae</taxon>
        <taxon>Mus</taxon>
        <taxon>Mus</taxon>
    </lineage>
</organism>
<sequence>MTEGSQIFLLPISTSDSTKEPLSPVASKAQDPSLLSNRLMIEKQQEEAEWESINGLLMTHGFKPLCLVKGADLRDFIVFDKQSSQKMRQILKTLMEETTRQQSMIRELIETNQQLKSELQLEQNRAAHQEQRANDLQQIMDSVKSKIGELEDESLNRVCQQQNRIKDLQKEYKMLQMKCQQYKKNRMEQEGTIASLQKEIHRLAKEEEERILTQNRVFAHLCRRVPHSVLDKQLLCLIDYYECKLRKLHIQRQFEEDSQSEEKDFTNLGASPNYKGVLMSLQKQLKESKSRIDVLVGEKLSLQKDLENRPTEHELRLYKQQVKKLEKTLKKNIKLQDLIGQKKSDDTEKKDEPSKDSHQQALIEQSYFQVLCSINSIVHNPRAPVIIYKQSKGRAPNGNKDIGQDCGFEHLVPIIEMWVDELTSLKDLYKSLKILSAELVPWHSLKKLDEKEGVKVGDLLFMVDTMLEEVENQKETSSTPNSQTLQAIVSHFQKLFDVQSLNGVFPRMNEVYTRLGEMNNAVRNLQELLELDSSSSLCVVVSTVGKLCEIINKDVSEQVKQVLGPEDLQSIIKKLEEHEEFFPAFQAFANDLLEILEIDDLDAIVPAVKKLKILSY</sequence>
<keyword id="KW-0025">Alternative splicing</keyword>
<keyword id="KW-0175">Coiled coil</keyword>
<keyword id="KW-0963">Cytoplasm</keyword>
<keyword id="KW-0206">Cytoskeleton</keyword>
<keyword id="KW-1185">Reference proteome</keyword>
<keyword id="KW-0802">TPR repeat</keyword>
<evidence type="ECO:0000250" key="1"/>
<evidence type="ECO:0000255" key="2"/>
<evidence type="ECO:0000303" key="3">
    <source>
    </source>
</evidence>
<evidence type="ECO:0000305" key="4"/>
<comment type="function">
    <text evidence="1">Plays a role in the organization of both preexisting and nascent microtubules in interphase cells. During mitosis, required for the organization and orientation of the mitotic spindle (By similarity).</text>
</comment>
<comment type="subunit">
    <text evidence="1">Directly interacts with tubulin-gamma; this interaction determines centrosomal localization.</text>
</comment>
<comment type="subcellular location">
    <subcellularLocation>
        <location evidence="1">Cytoplasm</location>
        <location evidence="1">Cytoskeleton</location>
        <location evidence="1">Microtubule organizing center</location>
        <location evidence="1">Centrosome</location>
    </subcellularLocation>
</comment>
<comment type="alternative products">
    <event type="alternative splicing"/>
    <isoform>
        <id>Q6IQY5-1</id>
        <name>1</name>
        <sequence type="displayed"/>
    </isoform>
    <isoform>
        <id>Q6IQY5-2</id>
        <name>2</name>
        <sequence type="described" ref="VSP_042142 VSP_042143"/>
    </isoform>
</comment>
<comment type="domain">
    <text evidence="1">The coiled-coil domains may be important for tubulin-gamma-binding and hence for centrosomal localization.</text>
</comment>
<comment type="sequence caution" evidence="4">
    <conflict type="frameshift">
        <sequence resource="EMBL-CDS" id="AAF97768"/>
    </conflict>
</comment>
<accession>Q6IQY5</accession>
<accession>Q3V0L8</accession>
<accession>Q9CRL9</accession>
<accession>Q9CTS4</accession>
<accession>Q9JIC1</accession>
<dbReference type="EMBL" id="AF242319">
    <property type="protein sequence ID" value="AAF97768.1"/>
    <property type="status" value="ALT_FRAME"/>
    <property type="molecule type" value="mRNA"/>
</dbReference>
<dbReference type="EMBL" id="AK020174">
    <property type="protein sequence ID" value="BAB32020.1"/>
    <property type="molecule type" value="mRNA"/>
</dbReference>
<dbReference type="EMBL" id="AK020622">
    <property type="protein sequence ID" value="BAB32153.1"/>
    <property type="molecule type" value="mRNA"/>
</dbReference>
<dbReference type="EMBL" id="AK133048">
    <property type="protein sequence ID" value="BAE21486.1"/>
    <property type="molecule type" value="mRNA"/>
</dbReference>
<dbReference type="EMBL" id="BC050819">
    <property type="protein sequence ID" value="AAH50819.1"/>
    <property type="molecule type" value="mRNA"/>
</dbReference>
<dbReference type="EMBL" id="BC071260">
    <property type="protein sequence ID" value="AAH71260.1"/>
    <property type="molecule type" value="mRNA"/>
</dbReference>
<dbReference type="CCDS" id="CCDS40738.1">
    <molecule id="Q6IQY5-1"/>
</dbReference>
<dbReference type="RefSeq" id="NP_076362.2">
    <molecule id="Q6IQY5-1"/>
    <property type="nucleotide sequence ID" value="NM_023873.5"/>
</dbReference>
<dbReference type="RefSeq" id="XP_006511449.1">
    <property type="nucleotide sequence ID" value="XM_006511386.3"/>
</dbReference>
<dbReference type="RefSeq" id="XP_011241104.1">
    <property type="nucleotide sequence ID" value="XM_011242802.2"/>
</dbReference>
<dbReference type="RefSeq" id="XP_030100393.1">
    <molecule id="Q6IQY5-1"/>
    <property type="nucleotide sequence ID" value="XM_030244533.2"/>
</dbReference>
<dbReference type="RefSeq" id="XP_030100394.1">
    <molecule id="Q6IQY5-1"/>
    <property type="nucleotide sequence ID" value="XM_030244534.2"/>
</dbReference>
<dbReference type="RefSeq" id="XP_030100395.1">
    <molecule id="Q6IQY5-1"/>
    <property type="nucleotide sequence ID" value="XM_030244535.2"/>
</dbReference>
<dbReference type="RefSeq" id="XP_030100396.1">
    <molecule id="Q6IQY5-1"/>
    <property type="nucleotide sequence ID" value="XM_030244536.2"/>
</dbReference>
<dbReference type="SMR" id="Q6IQY5"/>
<dbReference type="BioGRID" id="212668">
    <property type="interactions" value="5"/>
</dbReference>
<dbReference type="FunCoup" id="Q6IQY5">
    <property type="interactions" value="332"/>
</dbReference>
<dbReference type="STRING" id="10090.ENSMUSP00000091312"/>
<dbReference type="iPTMnet" id="Q6IQY5"/>
<dbReference type="PhosphoSitePlus" id="Q6IQY5"/>
<dbReference type="jPOST" id="Q6IQY5"/>
<dbReference type="PaxDb" id="10090-ENSMUSP00000091312"/>
<dbReference type="ProteomicsDB" id="281380">
    <molecule id="Q6IQY5-1"/>
</dbReference>
<dbReference type="ProteomicsDB" id="281381">
    <molecule id="Q6IQY5-2"/>
</dbReference>
<dbReference type="Antibodypedia" id="46706">
    <property type="antibodies" value="210 antibodies from 26 providers"/>
</dbReference>
<dbReference type="Ensembl" id="ENSMUST00000093795.10">
    <molecule id="Q6IQY5-1"/>
    <property type="protein sequence ID" value="ENSMUSP00000091312.4"/>
    <property type="gene ID" value="ENSMUSG00000056267.15"/>
</dbReference>
<dbReference type="Ensembl" id="ENSMUST00000191335.7">
    <molecule id="Q6IQY5-2"/>
    <property type="protein sequence ID" value="ENSMUSP00000139816.2"/>
    <property type="gene ID" value="ENSMUSG00000056267.15"/>
</dbReference>
<dbReference type="GeneID" id="68121"/>
<dbReference type="KEGG" id="mmu:68121"/>
<dbReference type="UCSC" id="uc009rdy.1">
    <molecule id="Q6IQY5-2"/>
    <property type="organism name" value="mouse"/>
</dbReference>
<dbReference type="UCSC" id="uc009rdz.1">
    <molecule id="Q6IQY5-1"/>
    <property type="organism name" value="mouse"/>
</dbReference>
<dbReference type="AGR" id="MGI:1915371"/>
<dbReference type="CTD" id="80321"/>
<dbReference type="MGI" id="MGI:1915371">
    <property type="gene designation" value="Cep70"/>
</dbReference>
<dbReference type="VEuPathDB" id="HostDB:ENSMUSG00000056267"/>
<dbReference type="eggNOG" id="ENOG502QS45">
    <property type="taxonomic scope" value="Eukaryota"/>
</dbReference>
<dbReference type="GeneTree" id="ENSGT00390000009029"/>
<dbReference type="HOGENOM" id="CLU_032136_0_0_1"/>
<dbReference type="InParanoid" id="Q6IQY5"/>
<dbReference type="OMA" id="ACQQYLQ"/>
<dbReference type="OrthoDB" id="2020926at2759"/>
<dbReference type="PhylomeDB" id="Q6IQY5"/>
<dbReference type="TreeFam" id="TF330986"/>
<dbReference type="Reactome" id="R-MMU-2565942">
    <property type="pathway name" value="Regulation of PLK1 Activity at G2/M Transition"/>
</dbReference>
<dbReference type="Reactome" id="R-MMU-380259">
    <property type="pathway name" value="Loss of Nlp from mitotic centrosomes"/>
</dbReference>
<dbReference type="Reactome" id="R-MMU-380270">
    <property type="pathway name" value="Recruitment of mitotic centrosome proteins and complexes"/>
</dbReference>
<dbReference type="Reactome" id="R-MMU-380284">
    <property type="pathway name" value="Loss of proteins required for interphase microtubule organization from the centrosome"/>
</dbReference>
<dbReference type="Reactome" id="R-MMU-380320">
    <property type="pathway name" value="Recruitment of NuMA to mitotic centrosomes"/>
</dbReference>
<dbReference type="Reactome" id="R-MMU-5620912">
    <property type="pathway name" value="Anchoring of the basal body to the plasma membrane"/>
</dbReference>
<dbReference type="Reactome" id="R-MMU-8854518">
    <property type="pathway name" value="AURKA Activation by TPX2"/>
</dbReference>
<dbReference type="BioGRID-ORCS" id="68121">
    <property type="hits" value="3 hits in 77 CRISPR screens"/>
</dbReference>
<dbReference type="ChiTaRS" id="Cep70">
    <property type="organism name" value="mouse"/>
</dbReference>
<dbReference type="PRO" id="PR:Q6IQY5"/>
<dbReference type="Proteomes" id="UP000000589">
    <property type="component" value="Chromosome 9"/>
</dbReference>
<dbReference type="RNAct" id="Q6IQY5">
    <property type="molecule type" value="protein"/>
</dbReference>
<dbReference type="Bgee" id="ENSMUSG00000056267">
    <property type="expression patterns" value="Expressed in animal zygote and 236 other cell types or tissues"/>
</dbReference>
<dbReference type="ExpressionAtlas" id="Q6IQY5">
    <property type="expression patterns" value="baseline and differential"/>
</dbReference>
<dbReference type="GO" id="GO:0005813">
    <property type="term" value="C:centrosome"/>
    <property type="evidence" value="ECO:0007669"/>
    <property type="project" value="UniProtKB-SubCell"/>
</dbReference>
<dbReference type="GO" id="GO:0005737">
    <property type="term" value="C:cytoplasm"/>
    <property type="evidence" value="ECO:0007669"/>
    <property type="project" value="UniProtKB-KW"/>
</dbReference>
<dbReference type="GO" id="GO:0043015">
    <property type="term" value="F:gamma-tubulin binding"/>
    <property type="evidence" value="ECO:0007669"/>
    <property type="project" value="InterPro"/>
</dbReference>
<dbReference type="GO" id="GO:0042802">
    <property type="term" value="F:identical protein binding"/>
    <property type="evidence" value="ECO:0007669"/>
    <property type="project" value="Ensembl"/>
</dbReference>
<dbReference type="GO" id="GO:0060271">
    <property type="term" value="P:cilium assembly"/>
    <property type="evidence" value="ECO:0007669"/>
    <property type="project" value="InterPro"/>
</dbReference>
<dbReference type="GO" id="GO:0070507">
    <property type="term" value="P:regulation of microtubule cytoskeleton organization"/>
    <property type="evidence" value="ECO:0007669"/>
    <property type="project" value="InterPro"/>
</dbReference>
<dbReference type="InterPro" id="IPR037692">
    <property type="entry name" value="CEP70"/>
</dbReference>
<dbReference type="InterPro" id="IPR019734">
    <property type="entry name" value="TPR_rpt"/>
</dbReference>
<dbReference type="PANTHER" id="PTHR14594">
    <property type="entry name" value="CENTROSOMAL PROTEIN OF 70 KDA"/>
    <property type="match status" value="1"/>
</dbReference>
<dbReference type="PANTHER" id="PTHR14594:SF1">
    <property type="entry name" value="CENTROSOMAL PROTEIN OF 70 KDA"/>
    <property type="match status" value="1"/>
</dbReference>
<dbReference type="PROSITE" id="PS50005">
    <property type="entry name" value="TPR"/>
    <property type="match status" value="1"/>
</dbReference>
<feature type="chain" id="PRO_0000089498" description="Centrosomal protein of 70 kDa">
    <location>
        <begin position="1"/>
        <end position="616"/>
    </location>
</feature>
<feature type="repeat" description="TPR">
    <location>
        <begin position="502"/>
        <end position="535"/>
    </location>
</feature>
<feature type="coiled-coil region" evidence="2">
    <location>
        <begin position="96"/>
        <end position="210"/>
    </location>
</feature>
<feature type="coiled-coil region" evidence="2">
    <location>
        <begin position="273"/>
        <end position="335"/>
    </location>
</feature>
<feature type="splice variant" id="VSP_042142" description="In isoform 2." evidence="3">
    <original>SIIKKLEEH</original>
    <variation>RYLLEMHLE</variation>
    <location>
        <begin position="570"/>
        <end position="578"/>
    </location>
</feature>
<feature type="splice variant" id="VSP_042143" description="In isoform 2." evidence="3">
    <location>
        <begin position="579"/>
        <end position="616"/>
    </location>
</feature>
<feature type="sequence conflict" description="In Ref. 2; BAE21486." evidence="4" ref="2">
    <original>T</original>
    <variation>I</variation>
    <location>
        <position position="18"/>
    </location>
</feature>
<feature type="sequence conflict" description="In Ref. 1; AAF97768." evidence="4" ref="1">
    <original>T</original>
    <variation>L</variation>
    <location>
        <position position="213"/>
    </location>
</feature>
<feature type="sequence conflict" description="In Ref. 1; AAF97768." evidence="4" ref="1">
    <original>K</original>
    <variation>Q</variation>
    <location>
        <position position="244"/>
    </location>
</feature>
<feature type="sequence conflict" description="In Ref. 1; AAF97768." evidence="4" ref="1">
    <original>K</original>
    <variation>R</variation>
    <location>
        <position position="286"/>
    </location>
</feature>
<feature type="sequence conflict" description="In Ref. 1; AAF97768." evidence="4" ref="1">
    <original>L</original>
    <variation>F</variation>
    <location>
        <position position="335"/>
    </location>
</feature>
<name>CEP70_MOUSE</name>
<proteinExistence type="evidence at transcript level"/>